<gene>
    <name type="primary">bopE</name>
    <name type="ordered locus">BPSS1525</name>
</gene>
<keyword id="KW-0002">3D-structure</keyword>
<keyword id="KW-0343">GTPase activation</keyword>
<keyword id="KW-0344">Guanine-nucleotide releasing factor</keyword>
<keyword id="KW-1185">Reference proteome</keyword>
<keyword id="KW-0964">Secreted</keyword>
<keyword id="KW-0843">Virulence</keyword>
<dbReference type="EMBL" id="BX571966">
    <property type="protein sequence ID" value="CAH38998.1"/>
    <property type="molecule type" value="Genomic_DNA"/>
</dbReference>
<dbReference type="RefSeq" id="WP_004528812.1">
    <property type="nucleotide sequence ID" value="NZ_CP009537.1"/>
</dbReference>
<dbReference type="RefSeq" id="YP_111531.1">
    <property type="nucleotide sequence ID" value="NC_006351.1"/>
</dbReference>
<dbReference type="PDB" id="2JOK">
    <property type="method" value="NMR"/>
    <property type="chains" value="A=78-261"/>
</dbReference>
<dbReference type="PDB" id="2JOL">
    <property type="method" value="NMR"/>
    <property type="chains" value="A=78-261"/>
</dbReference>
<dbReference type="PDBsum" id="2JOK"/>
<dbReference type="PDBsum" id="2JOL"/>
<dbReference type="SMR" id="Q63K41"/>
<dbReference type="STRING" id="272560.BPSS1525"/>
<dbReference type="KEGG" id="bps:BPSS1525"/>
<dbReference type="PATRIC" id="fig|272560.51.peg.4880"/>
<dbReference type="eggNOG" id="ENOG5033HJR">
    <property type="taxonomic scope" value="Bacteria"/>
</dbReference>
<dbReference type="EvolutionaryTrace" id="Q63K41"/>
<dbReference type="Proteomes" id="UP000000605">
    <property type="component" value="Chromosome 2"/>
</dbReference>
<dbReference type="GO" id="GO:0005576">
    <property type="term" value="C:extracellular region"/>
    <property type="evidence" value="ECO:0007669"/>
    <property type="project" value="UniProtKB-SubCell"/>
</dbReference>
<dbReference type="GO" id="GO:0005096">
    <property type="term" value="F:GTPase activator activity"/>
    <property type="evidence" value="ECO:0007669"/>
    <property type="project" value="UniProtKB-KW"/>
</dbReference>
<dbReference type="GO" id="GO:0005085">
    <property type="term" value="F:guanyl-nucleotide exchange factor activity"/>
    <property type="evidence" value="ECO:0007669"/>
    <property type="project" value="UniProtKB-KW"/>
</dbReference>
<dbReference type="GO" id="GO:0030036">
    <property type="term" value="P:actin cytoskeleton organization"/>
    <property type="evidence" value="ECO:0007669"/>
    <property type="project" value="InterPro"/>
</dbReference>
<dbReference type="Gene3D" id="1.10.4120.10">
    <property type="entry name" value="SopE-like, GEF domain"/>
    <property type="match status" value="1"/>
</dbReference>
<dbReference type="InterPro" id="IPR005414">
    <property type="entry name" value="SopE"/>
</dbReference>
<dbReference type="InterPro" id="IPR035949">
    <property type="entry name" value="SopE-like_GEF_dom_sf"/>
</dbReference>
<dbReference type="InterPro" id="IPR016019">
    <property type="entry name" value="SopE_GEF_dom"/>
</dbReference>
<dbReference type="NCBIfam" id="NF011808">
    <property type="entry name" value="PRK15278.1"/>
    <property type="match status" value="1"/>
</dbReference>
<dbReference type="Pfam" id="PF07487">
    <property type="entry name" value="SopE_GEF"/>
    <property type="match status" value="1"/>
</dbReference>
<dbReference type="PIRSF" id="PIRSF034781">
    <property type="entry name" value="SecIII_sopE"/>
    <property type="match status" value="1"/>
</dbReference>
<dbReference type="PRINTS" id="PR01593">
    <property type="entry name" value="SOPEPROTEIN"/>
</dbReference>
<dbReference type="SUPFAM" id="SSF81832">
    <property type="entry name" value="SopE-like GEF domain"/>
    <property type="match status" value="1"/>
</dbReference>
<comment type="function">
    <text evidence="2 3 5">Activator for both CDC42 and RAC1 by directly interacting with these Rho GTPases and acting as a guanine nucleotide exchange factor (GEF). This activation results in actin cytoskeleton rearrangements and stimulates membrane ruffling, thus promoting bacterial entry into non-phagocytic cells.</text>
</comment>
<comment type="biophysicochemical properties">
    <phDependence>
        <text evidence="4">Active in pH ranges of 3.5-10.5.</text>
    </phDependence>
</comment>
<comment type="subunit">
    <text evidence="4 6 7">Monomer (Probable). Interacts with human CDC42.</text>
</comment>
<comment type="subcellular location">
    <subcellularLocation>
        <location evidence="3">Secreted</location>
    </subcellularLocation>
    <text evidence="1">Secreted via the bsa type III secretion system.</text>
</comment>
<comment type="miscellaneous">
    <text>Immunogenic protein that elicits T-cell-mediated immunity in mice.</text>
</comment>
<comment type="similarity">
    <text evidence="7">Belongs to the GEF (guanine exchange factor) SopE family.</text>
</comment>
<protein>
    <recommendedName>
        <fullName>Guanine nucleotide exchange factor BopE</fullName>
    </recommendedName>
    <alternativeName>
        <fullName>Effector protein BopE</fullName>
    </alternativeName>
</protein>
<sequence>MTYNPRIGGFTHVKQASFDVHVKRGEAQPRTSFAQQIKRIFSKIGETLGQLFRHRAPDSAPGRVRLQGVRYVGSYRPTGDAKQAIRHFVDEAVKQVAHARTPEIRQDAEFGRQVYEATLCAIFSEAKDRFCMDPATRAGNVRPAFIEALGDAARATGLPGADKQGVFTPSGAGTNPLYTEIRLRADTLMGAELAARPEYRELQPYARQQAIDLVANALPAERSNTLVEFRQTVQTLEATYRRAAQDASRDEKGATNAADGA</sequence>
<name>BOPE_BURPS</name>
<organism>
    <name type="scientific">Burkholderia pseudomallei (strain K96243)</name>
    <dbReference type="NCBI Taxonomy" id="272560"/>
    <lineage>
        <taxon>Bacteria</taxon>
        <taxon>Pseudomonadati</taxon>
        <taxon>Pseudomonadota</taxon>
        <taxon>Betaproteobacteria</taxon>
        <taxon>Burkholderiales</taxon>
        <taxon>Burkholderiaceae</taxon>
        <taxon>Burkholderia</taxon>
        <taxon>pseudomallei group</taxon>
    </lineage>
</organism>
<accession>Q63K41</accession>
<reference key="1">
    <citation type="journal article" date="2004" name="Proc. Natl. Acad. Sci. U.S.A.">
        <title>Genomic plasticity of the causative agent of melioidosis, Burkholderia pseudomallei.</title>
        <authorList>
            <person name="Holden M.T.G."/>
            <person name="Titball R.W."/>
            <person name="Peacock S.J."/>
            <person name="Cerdeno-Tarraga A.-M."/>
            <person name="Atkins T."/>
            <person name="Crossman L.C."/>
            <person name="Pitt T."/>
            <person name="Churcher C."/>
            <person name="Mungall K.L."/>
            <person name="Bentley S.D."/>
            <person name="Sebaihia M."/>
            <person name="Thomson N.R."/>
            <person name="Bason N."/>
            <person name="Beacham I.R."/>
            <person name="Brooks K."/>
            <person name="Brown K.A."/>
            <person name="Brown N.F."/>
            <person name="Challis G.L."/>
            <person name="Cherevach I."/>
            <person name="Chillingworth T."/>
            <person name="Cronin A."/>
            <person name="Crossett B."/>
            <person name="Davis P."/>
            <person name="DeShazer D."/>
            <person name="Feltwell T."/>
            <person name="Fraser A."/>
            <person name="Hance Z."/>
            <person name="Hauser H."/>
            <person name="Holroyd S."/>
            <person name="Jagels K."/>
            <person name="Keith K.E."/>
            <person name="Maddison M."/>
            <person name="Moule S."/>
            <person name="Price C."/>
            <person name="Quail M.A."/>
            <person name="Rabbinowitsch E."/>
            <person name="Rutherford K."/>
            <person name="Sanders M."/>
            <person name="Simmonds M."/>
            <person name="Songsivilai S."/>
            <person name="Stevens K."/>
            <person name="Tumapa S."/>
            <person name="Vesaratchavest M."/>
            <person name="Whitehead S."/>
            <person name="Yeats C."/>
            <person name="Barrell B.G."/>
            <person name="Oyston P.C.F."/>
            <person name="Parkhill J."/>
        </authorList>
    </citation>
    <scope>NUCLEOTIDE SEQUENCE [LARGE SCALE GENOMIC DNA]</scope>
    <source>
        <strain>K96243</strain>
    </source>
</reference>
<reference key="2">
    <citation type="journal article" date="2002" name="Mol. Microbiol.">
        <title>An Inv/Mxi-Spa-like type III protein secretion system in Burkholderia pseudomallei modulates intracellular behaviour of the pathogen.</title>
        <authorList>
            <person name="Stevens M.P."/>
            <person name="Wood M.W."/>
            <person name="Taylor L.A."/>
            <person name="Monaghan P."/>
            <person name="Hawes P."/>
            <person name="Jones P.W."/>
            <person name="Wallis T.S."/>
            <person name="Galyov E.E."/>
        </authorList>
    </citation>
    <scope>ROLE IN INVASION OF HOST CELLS</scope>
    <source>
        <strain>10276</strain>
    </source>
</reference>
<reference key="3">
    <citation type="journal article" date="2003" name="J. Bacteriol.">
        <title>A Burkholderia pseudomallei type III secreted protein, BopE, facilitates bacterial invasion of epithelial cells and exhibits guanine nucleotide exchange factor activity.</title>
        <authorList>
            <person name="Stevens M.P."/>
            <person name="Friebel A."/>
            <person name="Taylor L.A."/>
            <person name="Wood M.W."/>
            <person name="Brown P.J."/>
            <person name="Hardt W.-D."/>
            <person name="Galyov E.E."/>
        </authorList>
    </citation>
    <scope>ROLE IN INVASION OF HOST CELLS</scope>
    <scope>SUBCELLULAR LOCATION</scope>
    <source>
        <strain>576</strain>
    </source>
</reference>
<reference key="4">
    <citation type="journal article" date="2004" name="Biochim. Biophys. Acta">
        <title>Biophysical characterization of the catalytic domain of guanine nucleotide exchange factor BopE from Burkholderia pseudomallei.</title>
        <authorList>
            <person name="Upadhyay A."/>
            <person name="Williams C."/>
            <person name="Gill A.C."/>
            <person name="Philippe D.L."/>
            <person name="Davis K."/>
            <person name="Taylor L.A."/>
            <person name="Stevens M.P."/>
            <person name="Galyov E.E."/>
            <person name="Bagby S."/>
        </authorList>
    </citation>
    <scope>BIOPHYSICOCHEMICAL PROPERTIES</scope>
    <scope>SUBUNIT</scope>
    <source>
        <strain>576</strain>
    </source>
</reference>
<reference key="5">
    <citation type="journal article" date="2004" name="Microbiology">
        <title>Attenuated virulence and protective efficacy of a Burkholderia pseudomallei bsa type III secretion mutant in murine models of melioidosis.</title>
        <authorList>
            <person name="Stevens M.P."/>
            <person name="Haque A."/>
            <person name="Atkins T."/>
            <person name="Hill J."/>
            <person name="Wood M.W."/>
            <person name="Easton A."/>
            <person name="Nelson M."/>
            <person name="Underwood-Fowler C."/>
            <person name="Titball R.W."/>
            <person name="Bancroft G.J."/>
            <person name="Galyov E.E."/>
        </authorList>
    </citation>
    <scope>ROLE IN VIRULENCE</scope>
    <source>
        <strain>576</strain>
    </source>
</reference>
<reference key="6">
    <citation type="journal article" date="2006" name="J. Infect. Dis.">
        <title>A live experimental vaccine against Burkholderia pseudomallei elicits CD4+ T cell-mediated immunity, priming T cells specific for 2 type III secretion system proteins.</title>
        <authorList>
            <person name="Haque A."/>
            <person name="Chu K."/>
            <person name="Easton A."/>
            <person name="Stevens M.P."/>
            <person name="Galyov E.E."/>
            <person name="Atkins T."/>
            <person name="Titball R."/>
            <person name="Bancroft G.J."/>
        </authorList>
    </citation>
    <scope>IMMUNOGENICITY</scope>
    <source>
        <strain>576</strain>
    </source>
</reference>
<reference key="7">
    <citation type="journal article" date="2008" name="Biochem. J.">
        <title>The guanine-nucleotide-exchange factor BopE from Burkholderia pseudomallei adopts a compact version of the Salmonella SopE/SopE2 fold and undergoes a closed-to-open conformational change upon interaction with Cdc42.</title>
        <authorList>
            <person name="Upadhyay A."/>
            <person name="Wu H.-L."/>
            <person name="Williams C."/>
            <person name="Field T."/>
            <person name="Galyov E.E."/>
            <person name="van den Elsen J.M.H."/>
            <person name="Bagby S."/>
        </authorList>
    </citation>
    <scope>STRUCTURE BY NMR OF 78-261</scope>
    <scope>MUTAGENESIS OF ARG-207; ASN-216; ASN-224 AND ARG-230</scope>
    <scope>INTERACTION WITH HUMAN CDC42</scope>
</reference>
<proteinExistence type="evidence at protein level"/>
<feature type="chain" id="PRO_0000344030" description="Guanine nucleotide exchange factor BopE">
    <location>
        <begin position="1"/>
        <end position="261"/>
    </location>
</feature>
<feature type="mutagenesis site" description="Loss of GEF activity; when associated with P-216." evidence="6">
    <original>R</original>
    <variation>E</variation>
    <location>
        <position position="207"/>
    </location>
</feature>
<feature type="mutagenesis site" description="Loss of GEF activity; when associated with E-207." evidence="6">
    <original>N</original>
    <variation>P</variation>
    <location>
        <position position="216"/>
    </location>
</feature>
<feature type="mutagenesis site" description="Increased GEF activity; when associated with Q-230." evidence="6">
    <original>N</original>
    <variation>P</variation>
    <location>
        <position position="224"/>
    </location>
</feature>
<feature type="mutagenesis site" description="Increased GEF activity; when associated with P-224." evidence="6">
    <original>R</original>
    <variation>Q</variation>
    <location>
        <position position="230"/>
    </location>
</feature>
<feature type="turn" evidence="8">
    <location>
        <begin position="79"/>
        <end position="83"/>
    </location>
</feature>
<feature type="helix" evidence="8">
    <location>
        <begin position="84"/>
        <end position="99"/>
    </location>
</feature>
<feature type="helix" evidence="8">
    <location>
        <begin position="101"/>
        <end position="106"/>
    </location>
</feature>
<feature type="turn" evidence="9">
    <location>
        <begin position="107"/>
        <end position="109"/>
    </location>
</feature>
<feature type="helix" evidence="8">
    <location>
        <begin position="110"/>
        <end position="132"/>
    </location>
</feature>
<feature type="helix" evidence="8">
    <location>
        <begin position="134"/>
        <end position="136"/>
    </location>
</feature>
<feature type="strand" evidence="8">
    <location>
        <begin position="137"/>
        <end position="141"/>
    </location>
</feature>
<feature type="helix" evidence="8">
    <location>
        <begin position="142"/>
        <end position="156"/>
    </location>
</feature>
<feature type="strand" evidence="8">
    <location>
        <begin position="161"/>
        <end position="163"/>
    </location>
</feature>
<feature type="strand" evidence="8">
    <location>
        <begin position="166"/>
        <end position="168"/>
    </location>
</feature>
<feature type="helix" evidence="8">
    <location>
        <begin position="178"/>
        <end position="188"/>
    </location>
</feature>
<feature type="helix" evidence="8">
    <location>
        <begin position="192"/>
        <end position="195"/>
    </location>
</feature>
<feature type="helix" evidence="8">
    <location>
        <begin position="197"/>
        <end position="199"/>
    </location>
</feature>
<feature type="helix" evidence="8">
    <location>
        <begin position="204"/>
        <end position="216"/>
    </location>
</feature>
<feature type="helix" evidence="8">
    <location>
        <begin position="221"/>
        <end position="251"/>
    </location>
</feature>
<feature type="strand" evidence="8">
    <location>
        <begin position="253"/>
        <end position="258"/>
    </location>
</feature>
<evidence type="ECO:0000250" key="1"/>
<evidence type="ECO:0000269" key="2">
    <source>
    </source>
</evidence>
<evidence type="ECO:0000269" key="3">
    <source>
    </source>
</evidence>
<evidence type="ECO:0000269" key="4">
    <source>
    </source>
</evidence>
<evidence type="ECO:0000269" key="5">
    <source>
    </source>
</evidence>
<evidence type="ECO:0000269" key="6">
    <source>
    </source>
</evidence>
<evidence type="ECO:0000305" key="7"/>
<evidence type="ECO:0007829" key="8">
    <source>
        <dbReference type="PDB" id="2JOK"/>
    </source>
</evidence>
<evidence type="ECO:0007829" key="9">
    <source>
        <dbReference type="PDB" id="2JOL"/>
    </source>
</evidence>